<comment type="similarity">
    <text evidence="1">Belongs to the bacterial ribosomal protein bL35 family.</text>
</comment>
<keyword id="KW-1185">Reference proteome</keyword>
<keyword id="KW-0687">Ribonucleoprotein</keyword>
<keyword id="KW-0689">Ribosomal protein</keyword>
<sequence length="66" mass="7354">MPKLKTKSGAKKRFKLTATGKLKAGVAGKRHRLIGHNGKYIRQNRGTKVMSEADAKIIRTYLPYGL</sequence>
<proteinExistence type="inferred from homology"/>
<name>RL35_CAUVC</name>
<feature type="chain" id="PRO_0000177344" description="Large ribosomal subunit protein bL35">
    <location>
        <begin position="1"/>
        <end position="66"/>
    </location>
</feature>
<accession>Q9A9E2</accession>
<gene>
    <name evidence="1" type="primary">rpmI</name>
    <name type="ordered locus">CC_1046</name>
</gene>
<reference key="1">
    <citation type="journal article" date="2001" name="Proc. Natl. Acad. Sci. U.S.A.">
        <title>Complete genome sequence of Caulobacter crescentus.</title>
        <authorList>
            <person name="Nierman W.C."/>
            <person name="Feldblyum T.V."/>
            <person name="Laub M.T."/>
            <person name="Paulsen I.T."/>
            <person name="Nelson K.E."/>
            <person name="Eisen J.A."/>
            <person name="Heidelberg J.F."/>
            <person name="Alley M.R.K."/>
            <person name="Ohta N."/>
            <person name="Maddock J.R."/>
            <person name="Potocka I."/>
            <person name="Nelson W.C."/>
            <person name="Newton A."/>
            <person name="Stephens C."/>
            <person name="Phadke N.D."/>
            <person name="Ely B."/>
            <person name="DeBoy R.T."/>
            <person name="Dodson R.J."/>
            <person name="Durkin A.S."/>
            <person name="Gwinn M.L."/>
            <person name="Haft D.H."/>
            <person name="Kolonay J.F."/>
            <person name="Smit J."/>
            <person name="Craven M.B."/>
            <person name="Khouri H.M."/>
            <person name="Shetty J."/>
            <person name="Berry K.J."/>
            <person name="Utterback T.R."/>
            <person name="Tran K."/>
            <person name="Wolf A.M."/>
            <person name="Vamathevan J.J."/>
            <person name="Ermolaeva M.D."/>
            <person name="White O."/>
            <person name="Salzberg S.L."/>
            <person name="Venter J.C."/>
            <person name="Shapiro L."/>
            <person name="Fraser C.M."/>
        </authorList>
    </citation>
    <scope>NUCLEOTIDE SEQUENCE [LARGE SCALE GENOMIC DNA]</scope>
    <source>
        <strain>ATCC 19089 / CIP 103742 / CB 15</strain>
    </source>
</reference>
<organism>
    <name type="scientific">Caulobacter vibrioides (strain ATCC 19089 / CIP 103742 / CB 15)</name>
    <name type="common">Caulobacter crescentus</name>
    <dbReference type="NCBI Taxonomy" id="190650"/>
    <lineage>
        <taxon>Bacteria</taxon>
        <taxon>Pseudomonadati</taxon>
        <taxon>Pseudomonadota</taxon>
        <taxon>Alphaproteobacteria</taxon>
        <taxon>Caulobacterales</taxon>
        <taxon>Caulobacteraceae</taxon>
        <taxon>Caulobacter</taxon>
    </lineage>
</organism>
<protein>
    <recommendedName>
        <fullName evidence="1">Large ribosomal subunit protein bL35</fullName>
    </recommendedName>
    <alternativeName>
        <fullName evidence="2">50S ribosomal protein L35</fullName>
    </alternativeName>
</protein>
<dbReference type="EMBL" id="AE005673">
    <property type="protein sequence ID" value="AAK23030.1"/>
    <property type="molecule type" value="Genomic_DNA"/>
</dbReference>
<dbReference type="PIR" id="B87379">
    <property type="entry name" value="B87379"/>
</dbReference>
<dbReference type="RefSeq" id="NP_419862.1">
    <property type="nucleotide sequence ID" value="NC_002696.2"/>
</dbReference>
<dbReference type="RefSeq" id="WP_010918930.1">
    <property type="nucleotide sequence ID" value="NC_002696.2"/>
</dbReference>
<dbReference type="SMR" id="Q9A9E2"/>
<dbReference type="STRING" id="190650.CC_1046"/>
<dbReference type="EnsemblBacteria" id="AAK23030">
    <property type="protein sequence ID" value="AAK23030"/>
    <property type="gene ID" value="CC_1046"/>
</dbReference>
<dbReference type="KEGG" id="ccr:CC_1046"/>
<dbReference type="PATRIC" id="fig|190650.5.peg.1063"/>
<dbReference type="eggNOG" id="COG0291">
    <property type="taxonomic scope" value="Bacteria"/>
</dbReference>
<dbReference type="HOGENOM" id="CLU_169643_2_1_5"/>
<dbReference type="BioCyc" id="CAULO:CC1046-MONOMER"/>
<dbReference type="Proteomes" id="UP000001816">
    <property type="component" value="Chromosome"/>
</dbReference>
<dbReference type="GO" id="GO:0022625">
    <property type="term" value="C:cytosolic large ribosomal subunit"/>
    <property type="evidence" value="ECO:0007669"/>
    <property type="project" value="TreeGrafter"/>
</dbReference>
<dbReference type="GO" id="GO:0003735">
    <property type="term" value="F:structural constituent of ribosome"/>
    <property type="evidence" value="ECO:0007669"/>
    <property type="project" value="InterPro"/>
</dbReference>
<dbReference type="GO" id="GO:0006412">
    <property type="term" value="P:translation"/>
    <property type="evidence" value="ECO:0007669"/>
    <property type="project" value="UniProtKB-UniRule"/>
</dbReference>
<dbReference type="FunFam" id="4.10.410.60:FF:000001">
    <property type="entry name" value="50S ribosomal protein L35"/>
    <property type="match status" value="1"/>
</dbReference>
<dbReference type="Gene3D" id="4.10.410.60">
    <property type="match status" value="1"/>
</dbReference>
<dbReference type="HAMAP" id="MF_00514">
    <property type="entry name" value="Ribosomal_bL35"/>
    <property type="match status" value="1"/>
</dbReference>
<dbReference type="InterPro" id="IPR001706">
    <property type="entry name" value="Ribosomal_bL35"/>
</dbReference>
<dbReference type="InterPro" id="IPR021137">
    <property type="entry name" value="Ribosomal_bL35-like"/>
</dbReference>
<dbReference type="InterPro" id="IPR018265">
    <property type="entry name" value="Ribosomal_bL35_CS"/>
</dbReference>
<dbReference type="InterPro" id="IPR037229">
    <property type="entry name" value="Ribosomal_bL35_sf"/>
</dbReference>
<dbReference type="NCBIfam" id="TIGR00001">
    <property type="entry name" value="rpmI_bact"/>
    <property type="match status" value="1"/>
</dbReference>
<dbReference type="PANTHER" id="PTHR33343">
    <property type="entry name" value="54S RIBOSOMAL PROTEIN BL35M"/>
    <property type="match status" value="1"/>
</dbReference>
<dbReference type="PANTHER" id="PTHR33343:SF1">
    <property type="entry name" value="LARGE RIBOSOMAL SUBUNIT PROTEIN BL35M"/>
    <property type="match status" value="1"/>
</dbReference>
<dbReference type="Pfam" id="PF01632">
    <property type="entry name" value="Ribosomal_L35p"/>
    <property type="match status" value="1"/>
</dbReference>
<dbReference type="PRINTS" id="PR00064">
    <property type="entry name" value="RIBOSOMALL35"/>
</dbReference>
<dbReference type="SUPFAM" id="SSF143034">
    <property type="entry name" value="L35p-like"/>
    <property type="match status" value="1"/>
</dbReference>
<dbReference type="PROSITE" id="PS00936">
    <property type="entry name" value="RIBOSOMAL_L35"/>
    <property type="match status" value="1"/>
</dbReference>
<evidence type="ECO:0000255" key="1">
    <source>
        <dbReference type="HAMAP-Rule" id="MF_00514"/>
    </source>
</evidence>
<evidence type="ECO:0000305" key="2"/>